<comment type="function">
    <text evidence="1">Catalyzes the attachment of proline to tRNA(Pro) in a two-step reaction: proline is first activated by ATP to form Pro-AMP and then transferred to the acceptor end of tRNA(Pro).</text>
</comment>
<comment type="catalytic activity">
    <reaction evidence="1">
        <text>tRNA(Pro) + L-proline + ATP = L-prolyl-tRNA(Pro) + AMP + diphosphate</text>
        <dbReference type="Rhea" id="RHEA:14305"/>
        <dbReference type="Rhea" id="RHEA-COMP:9700"/>
        <dbReference type="Rhea" id="RHEA-COMP:9702"/>
        <dbReference type="ChEBI" id="CHEBI:30616"/>
        <dbReference type="ChEBI" id="CHEBI:33019"/>
        <dbReference type="ChEBI" id="CHEBI:60039"/>
        <dbReference type="ChEBI" id="CHEBI:78442"/>
        <dbReference type="ChEBI" id="CHEBI:78532"/>
        <dbReference type="ChEBI" id="CHEBI:456215"/>
        <dbReference type="EC" id="6.1.1.15"/>
    </reaction>
</comment>
<comment type="subunit">
    <text evidence="1">Homodimer.</text>
</comment>
<comment type="subcellular location">
    <subcellularLocation>
        <location evidence="1">Cytoplasm</location>
    </subcellularLocation>
</comment>
<comment type="domain">
    <text evidence="1">Consists of three domains: the N-terminal catalytic domain, the anticodon-binding domain and the C-terminal extension.</text>
</comment>
<comment type="similarity">
    <text evidence="1">Belongs to the class-II aminoacyl-tRNA synthetase family. ProS type 3 subfamily.</text>
</comment>
<sequence>MPKEGITPRAQDYSQWYLDIVQQADLADYAEVVKGCIVFKPTGYALWEAIQRGLDDRIKATGHVNAYFPLLIPKSFLMKEAEHVEGFAPEVAEVTRAGGEDLAEPYVIRPTSETIIGYFYSKWVRSYRDLPLLINQWANVMRWEMRTRPFLRTTEFLWQEGHTVHATEEDAERETLLILHEVYADFVEKDMAIPVIRGLKSEKEKFPGALRSYCIEAMMQDGRALQAGTSHNLGQNFARAFDITYTDQHNTIQYAWTTSWGVSTRLIGALIMTHSDDEGLVIPPRLAPTQVVVVPIYRNDAERSVVMEAVQRMTAEWKGLLRFKVDDRDNLTPGFKFNEWELKGVPIRVEIGPKDIEKGSVAIARRDQPGREGKSFVPQEGLTARLAALLEEIQQALYRRALAFRETHTADVTTYEELKQQVERGFARCYWAGTMEDEKRIQEETRATIRCIPLDQPQQAGRCIYTGKETTQQVIFARAY</sequence>
<feature type="chain" id="PRO_1000215574" description="Proline--tRNA ligase">
    <location>
        <begin position="1"/>
        <end position="480"/>
    </location>
</feature>
<organism>
    <name type="scientific">Roseiflexus castenholzii (strain DSM 13941 / HLO8)</name>
    <dbReference type="NCBI Taxonomy" id="383372"/>
    <lineage>
        <taxon>Bacteria</taxon>
        <taxon>Bacillati</taxon>
        <taxon>Chloroflexota</taxon>
        <taxon>Chloroflexia</taxon>
        <taxon>Chloroflexales</taxon>
        <taxon>Roseiflexineae</taxon>
        <taxon>Roseiflexaceae</taxon>
        <taxon>Roseiflexus</taxon>
    </lineage>
</organism>
<reference key="1">
    <citation type="submission" date="2007-08" db="EMBL/GenBank/DDBJ databases">
        <title>Complete sequence of Roseiflexus castenholzii DSM 13941.</title>
        <authorList>
            <consortium name="US DOE Joint Genome Institute"/>
            <person name="Copeland A."/>
            <person name="Lucas S."/>
            <person name="Lapidus A."/>
            <person name="Barry K."/>
            <person name="Glavina del Rio T."/>
            <person name="Dalin E."/>
            <person name="Tice H."/>
            <person name="Pitluck S."/>
            <person name="Thompson L.S."/>
            <person name="Brettin T."/>
            <person name="Bruce D."/>
            <person name="Detter J.C."/>
            <person name="Han C."/>
            <person name="Tapia R."/>
            <person name="Schmutz J."/>
            <person name="Larimer F."/>
            <person name="Land M."/>
            <person name="Hauser L."/>
            <person name="Kyrpides N."/>
            <person name="Mikhailova N."/>
            <person name="Bryant D.A."/>
            <person name="Hanada S."/>
            <person name="Tsukatani Y."/>
            <person name="Richardson P."/>
        </authorList>
    </citation>
    <scope>NUCLEOTIDE SEQUENCE [LARGE SCALE GENOMIC DNA]</scope>
    <source>
        <strain>DSM 13941 / HLO8</strain>
    </source>
</reference>
<accession>A7NKX0</accession>
<proteinExistence type="inferred from homology"/>
<keyword id="KW-0030">Aminoacyl-tRNA synthetase</keyword>
<keyword id="KW-0067">ATP-binding</keyword>
<keyword id="KW-0963">Cytoplasm</keyword>
<keyword id="KW-0436">Ligase</keyword>
<keyword id="KW-0547">Nucleotide-binding</keyword>
<keyword id="KW-0648">Protein biosynthesis</keyword>
<keyword id="KW-1185">Reference proteome</keyword>
<name>SYP_ROSCS</name>
<protein>
    <recommendedName>
        <fullName evidence="1">Proline--tRNA ligase</fullName>
        <ecNumber evidence="1">6.1.1.15</ecNumber>
    </recommendedName>
    <alternativeName>
        <fullName evidence="1">Prolyl-tRNA synthetase</fullName>
        <shortName evidence="1">ProRS</shortName>
    </alternativeName>
</protein>
<gene>
    <name evidence="1" type="primary">proS</name>
    <name type="ordered locus">Rcas_2053</name>
</gene>
<evidence type="ECO:0000255" key="1">
    <source>
        <dbReference type="HAMAP-Rule" id="MF_01571"/>
    </source>
</evidence>
<dbReference type="EC" id="6.1.1.15" evidence="1"/>
<dbReference type="EMBL" id="CP000804">
    <property type="protein sequence ID" value="ABU58140.1"/>
    <property type="molecule type" value="Genomic_DNA"/>
</dbReference>
<dbReference type="RefSeq" id="WP_012120564.1">
    <property type="nucleotide sequence ID" value="NC_009767.1"/>
</dbReference>
<dbReference type="SMR" id="A7NKX0"/>
<dbReference type="STRING" id="383372.Rcas_2053"/>
<dbReference type="KEGG" id="rca:Rcas_2053"/>
<dbReference type="eggNOG" id="COG0442">
    <property type="taxonomic scope" value="Bacteria"/>
</dbReference>
<dbReference type="HOGENOM" id="CLU_001882_4_2_0"/>
<dbReference type="OrthoDB" id="9809052at2"/>
<dbReference type="Proteomes" id="UP000000263">
    <property type="component" value="Chromosome"/>
</dbReference>
<dbReference type="GO" id="GO:0017101">
    <property type="term" value="C:aminoacyl-tRNA synthetase multienzyme complex"/>
    <property type="evidence" value="ECO:0007669"/>
    <property type="project" value="TreeGrafter"/>
</dbReference>
<dbReference type="GO" id="GO:0005737">
    <property type="term" value="C:cytoplasm"/>
    <property type="evidence" value="ECO:0007669"/>
    <property type="project" value="UniProtKB-SubCell"/>
</dbReference>
<dbReference type="GO" id="GO:0005524">
    <property type="term" value="F:ATP binding"/>
    <property type="evidence" value="ECO:0007669"/>
    <property type="project" value="UniProtKB-UniRule"/>
</dbReference>
<dbReference type="GO" id="GO:0004827">
    <property type="term" value="F:proline-tRNA ligase activity"/>
    <property type="evidence" value="ECO:0007669"/>
    <property type="project" value="UniProtKB-UniRule"/>
</dbReference>
<dbReference type="GO" id="GO:0006433">
    <property type="term" value="P:prolyl-tRNA aminoacylation"/>
    <property type="evidence" value="ECO:0007669"/>
    <property type="project" value="UniProtKB-UniRule"/>
</dbReference>
<dbReference type="CDD" id="cd00862">
    <property type="entry name" value="ProRS_anticodon_zinc"/>
    <property type="match status" value="1"/>
</dbReference>
<dbReference type="CDD" id="cd00778">
    <property type="entry name" value="ProRS_core_arch_euk"/>
    <property type="match status" value="1"/>
</dbReference>
<dbReference type="FunFam" id="3.30.930.10:FF:000023">
    <property type="entry name" value="Proline--tRNA ligase"/>
    <property type="match status" value="1"/>
</dbReference>
<dbReference type="Gene3D" id="3.40.50.800">
    <property type="entry name" value="Anticodon-binding domain"/>
    <property type="match status" value="1"/>
</dbReference>
<dbReference type="Gene3D" id="3.30.930.10">
    <property type="entry name" value="Bira Bifunctional Protein, Domain 2"/>
    <property type="match status" value="1"/>
</dbReference>
<dbReference type="Gene3D" id="3.30.110.30">
    <property type="entry name" value="C-terminal domain of ProRS"/>
    <property type="match status" value="1"/>
</dbReference>
<dbReference type="HAMAP" id="MF_01571">
    <property type="entry name" value="Pro_tRNA_synth_type3"/>
    <property type="match status" value="1"/>
</dbReference>
<dbReference type="InterPro" id="IPR002314">
    <property type="entry name" value="aa-tRNA-synt_IIb"/>
</dbReference>
<dbReference type="InterPro" id="IPR006195">
    <property type="entry name" value="aa-tRNA-synth_II"/>
</dbReference>
<dbReference type="InterPro" id="IPR045864">
    <property type="entry name" value="aa-tRNA-synth_II/BPL/LPL"/>
</dbReference>
<dbReference type="InterPro" id="IPR004154">
    <property type="entry name" value="Anticodon-bd"/>
</dbReference>
<dbReference type="InterPro" id="IPR036621">
    <property type="entry name" value="Anticodon-bd_dom_sf"/>
</dbReference>
<dbReference type="InterPro" id="IPR002316">
    <property type="entry name" value="Pro-tRNA-ligase_IIa"/>
</dbReference>
<dbReference type="InterPro" id="IPR004499">
    <property type="entry name" value="Pro-tRNA-ligase_IIa_arc-type"/>
</dbReference>
<dbReference type="InterPro" id="IPR016061">
    <property type="entry name" value="Pro-tRNA_ligase_II_C"/>
</dbReference>
<dbReference type="InterPro" id="IPR017449">
    <property type="entry name" value="Pro-tRNA_synth_II"/>
</dbReference>
<dbReference type="InterPro" id="IPR033721">
    <property type="entry name" value="ProRS_core_arch_euk"/>
</dbReference>
<dbReference type="NCBIfam" id="TIGR00408">
    <property type="entry name" value="proS_fam_I"/>
    <property type="match status" value="1"/>
</dbReference>
<dbReference type="PANTHER" id="PTHR43382:SF2">
    <property type="entry name" value="BIFUNCTIONAL GLUTAMATE_PROLINE--TRNA LIGASE"/>
    <property type="match status" value="1"/>
</dbReference>
<dbReference type="PANTHER" id="PTHR43382">
    <property type="entry name" value="PROLYL-TRNA SYNTHETASE"/>
    <property type="match status" value="1"/>
</dbReference>
<dbReference type="Pfam" id="PF03129">
    <property type="entry name" value="HGTP_anticodon"/>
    <property type="match status" value="1"/>
</dbReference>
<dbReference type="Pfam" id="PF09180">
    <property type="entry name" value="ProRS-C_1"/>
    <property type="match status" value="1"/>
</dbReference>
<dbReference type="Pfam" id="PF00587">
    <property type="entry name" value="tRNA-synt_2b"/>
    <property type="match status" value="1"/>
</dbReference>
<dbReference type="PRINTS" id="PR01046">
    <property type="entry name" value="TRNASYNTHPRO"/>
</dbReference>
<dbReference type="SMART" id="SM00946">
    <property type="entry name" value="ProRS-C_1"/>
    <property type="match status" value="1"/>
</dbReference>
<dbReference type="SUPFAM" id="SSF64586">
    <property type="entry name" value="C-terminal domain of ProRS"/>
    <property type="match status" value="1"/>
</dbReference>
<dbReference type="SUPFAM" id="SSF52954">
    <property type="entry name" value="Class II aaRS ABD-related"/>
    <property type="match status" value="1"/>
</dbReference>
<dbReference type="SUPFAM" id="SSF55681">
    <property type="entry name" value="Class II aaRS and biotin synthetases"/>
    <property type="match status" value="1"/>
</dbReference>
<dbReference type="PROSITE" id="PS50862">
    <property type="entry name" value="AA_TRNA_LIGASE_II"/>
    <property type="match status" value="1"/>
</dbReference>